<name>RL2_KOSOT</name>
<reference key="1">
    <citation type="submission" date="2009-06" db="EMBL/GenBank/DDBJ databases">
        <title>Complete sequence of Thermotogales bacterium TBF 19.5.1.</title>
        <authorList>
            <consortium name="US DOE Joint Genome Institute"/>
            <person name="Lucas S."/>
            <person name="Copeland A."/>
            <person name="Lapidus A."/>
            <person name="Glavina del Rio T."/>
            <person name="Tice H."/>
            <person name="Bruce D."/>
            <person name="Goodwin L."/>
            <person name="Pitluck S."/>
            <person name="Chertkov O."/>
            <person name="Brettin T."/>
            <person name="Detter J.C."/>
            <person name="Han C."/>
            <person name="Schmutz J."/>
            <person name="Larimer F."/>
            <person name="Land M."/>
            <person name="Hauser L."/>
            <person name="Kyrpides N."/>
            <person name="Ovchinnikova G."/>
            <person name="Noll K."/>
        </authorList>
    </citation>
    <scope>NUCLEOTIDE SEQUENCE [LARGE SCALE GENOMIC DNA]</scope>
    <source>
        <strain>ATCC BAA-1733 / DSM 21960 / TBF 19.5.1</strain>
    </source>
</reference>
<feature type="chain" id="PRO_1000214451" description="Large ribosomal subunit protein uL2">
    <location>
        <begin position="1"/>
        <end position="275"/>
    </location>
</feature>
<feature type="region of interest" description="Disordered" evidence="2">
    <location>
        <begin position="221"/>
        <end position="275"/>
    </location>
</feature>
<keyword id="KW-1185">Reference proteome</keyword>
<keyword id="KW-0687">Ribonucleoprotein</keyword>
<keyword id="KW-0689">Ribosomal protein</keyword>
<keyword id="KW-0694">RNA-binding</keyword>
<keyword id="KW-0699">rRNA-binding</keyword>
<dbReference type="EMBL" id="CP001634">
    <property type="protein sequence ID" value="ACR80580.1"/>
    <property type="molecule type" value="Genomic_DNA"/>
</dbReference>
<dbReference type="RefSeq" id="WP_015869223.1">
    <property type="nucleotide sequence ID" value="NC_012785.1"/>
</dbReference>
<dbReference type="SMR" id="C5CGR1"/>
<dbReference type="STRING" id="521045.Kole_1899"/>
<dbReference type="KEGG" id="kol:Kole_1899"/>
<dbReference type="eggNOG" id="COG0090">
    <property type="taxonomic scope" value="Bacteria"/>
</dbReference>
<dbReference type="HOGENOM" id="CLU_036235_2_1_0"/>
<dbReference type="OrthoDB" id="9778722at2"/>
<dbReference type="Proteomes" id="UP000002382">
    <property type="component" value="Chromosome"/>
</dbReference>
<dbReference type="GO" id="GO:0015934">
    <property type="term" value="C:large ribosomal subunit"/>
    <property type="evidence" value="ECO:0007669"/>
    <property type="project" value="InterPro"/>
</dbReference>
<dbReference type="GO" id="GO:0019843">
    <property type="term" value="F:rRNA binding"/>
    <property type="evidence" value="ECO:0007669"/>
    <property type="project" value="UniProtKB-UniRule"/>
</dbReference>
<dbReference type="GO" id="GO:0003735">
    <property type="term" value="F:structural constituent of ribosome"/>
    <property type="evidence" value="ECO:0007669"/>
    <property type="project" value="InterPro"/>
</dbReference>
<dbReference type="GO" id="GO:0016740">
    <property type="term" value="F:transferase activity"/>
    <property type="evidence" value="ECO:0007669"/>
    <property type="project" value="InterPro"/>
</dbReference>
<dbReference type="GO" id="GO:0002181">
    <property type="term" value="P:cytoplasmic translation"/>
    <property type="evidence" value="ECO:0007669"/>
    <property type="project" value="TreeGrafter"/>
</dbReference>
<dbReference type="FunFam" id="2.30.30.30:FF:000001">
    <property type="entry name" value="50S ribosomal protein L2"/>
    <property type="match status" value="1"/>
</dbReference>
<dbReference type="FunFam" id="2.40.50.140:FF:000003">
    <property type="entry name" value="50S ribosomal protein L2"/>
    <property type="match status" value="1"/>
</dbReference>
<dbReference type="FunFam" id="4.10.950.10:FF:000001">
    <property type="entry name" value="50S ribosomal protein L2"/>
    <property type="match status" value="1"/>
</dbReference>
<dbReference type="Gene3D" id="2.30.30.30">
    <property type="match status" value="1"/>
</dbReference>
<dbReference type="Gene3D" id="2.40.50.140">
    <property type="entry name" value="Nucleic acid-binding proteins"/>
    <property type="match status" value="1"/>
</dbReference>
<dbReference type="Gene3D" id="4.10.950.10">
    <property type="entry name" value="Ribosomal protein L2, domain 3"/>
    <property type="match status" value="1"/>
</dbReference>
<dbReference type="HAMAP" id="MF_01320_B">
    <property type="entry name" value="Ribosomal_uL2_B"/>
    <property type="match status" value="1"/>
</dbReference>
<dbReference type="InterPro" id="IPR012340">
    <property type="entry name" value="NA-bd_OB-fold"/>
</dbReference>
<dbReference type="InterPro" id="IPR014722">
    <property type="entry name" value="Rib_uL2_dom2"/>
</dbReference>
<dbReference type="InterPro" id="IPR002171">
    <property type="entry name" value="Ribosomal_uL2"/>
</dbReference>
<dbReference type="InterPro" id="IPR005880">
    <property type="entry name" value="Ribosomal_uL2_bac/org-type"/>
</dbReference>
<dbReference type="InterPro" id="IPR022669">
    <property type="entry name" value="Ribosomal_uL2_C"/>
</dbReference>
<dbReference type="InterPro" id="IPR014726">
    <property type="entry name" value="Ribosomal_uL2_dom3"/>
</dbReference>
<dbReference type="InterPro" id="IPR022666">
    <property type="entry name" value="Ribosomal_uL2_RNA-bd_dom"/>
</dbReference>
<dbReference type="InterPro" id="IPR008991">
    <property type="entry name" value="Translation_prot_SH3-like_sf"/>
</dbReference>
<dbReference type="NCBIfam" id="TIGR01171">
    <property type="entry name" value="rplB_bact"/>
    <property type="match status" value="1"/>
</dbReference>
<dbReference type="PANTHER" id="PTHR13691:SF5">
    <property type="entry name" value="LARGE RIBOSOMAL SUBUNIT PROTEIN UL2M"/>
    <property type="match status" value="1"/>
</dbReference>
<dbReference type="PANTHER" id="PTHR13691">
    <property type="entry name" value="RIBOSOMAL PROTEIN L2"/>
    <property type="match status" value="1"/>
</dbReference>
<dbReference type="Pfam" id="PF00181">
    <property type="entry name" value="Ribosomal_L2"/>
    <property type="match status" value="1"/>
</dbReference>
<dbReference type="Pfam" id="PF03947">
    <property type="entry name" value="Ribosomal_L2_C"/>
    <property type="match status" value="1"/>
</dbReference>
<dbReference type="PIRSF" id="PIRSF002158">
    <property type="entry name" value="Ribosomal_L2"/>
    <property type="match status" value="1"/>
</dbReference>
<dbReference type="SMART" id="SM01383">
    <property type="entry name" value="Ribosomal_L2"/>
    <property type="match status" value="1"/>
</dbReference>
<dbReference type="SMART" id="SM01382">
    <property type="entry name" value="Ribosomal_L2_C"/>
    <property type="match status" value="1"/>
</dbReference>
<dbReference type="SUPFAM" id="SSF50249">
    <property type="entry name" value="Nucleic acid-binding proteins"/>
    <property type="match status" value="1"/>
</dbReference>
<dbReference type="SUPFAM" id="SSF50104">
    <property type="entry name" value="Translation proteins SH3-like domain"/>
    <property type="match status" value="1"/>
</dbReference>
<comment type="function">
    <text evidence="1">One of the primary rRNA binding proteins. Required for association of the 30S and 50S subunits to form the 70S ribosome, for tRNA binding and peptide bond formation. It has been suggested to have peptidyltransferase activity; this is somewhat controversial. Makes several contacts with the 16S rRNA in the 70S ribosome.</text>
</comment>
<comment type="subunit">
    <text evidence="1">Part of the 50S ribosomal subunit. Forms a bridge to the 30S subunit in the 70S ribosome.</text>
</comment>
<comment type="similarity">
    <text evidence="1">Belongs to the universal ribosomal protein uL2 family.</text>
</comment>
<protein>
    <recommendedName>
        <fullName evidence="1">Large ribosomal subunit protein uL2</fullName>
    </recommendedName>
    <alternativeName>
        <fullName evidence="3">50S ribosomal protein L2</fullName>
    </alternativeName>
</protein>
<proteinExistence type="inferred from homology"/>
<organism>
    <name type="scientific">Kosmotoga olearia (strain ATCC BAA-1733 / DSM 21960 / TBF 19.5.1)</name>
    <dbReference type="NCBI Taxonomy" id="521045"/>
    <lineage>
        <taxon>Bacteria</taxon>
        <taxon>Thermotogati</taxon>
        <taxon>Thermotogota</taxon>
        <taxon>Thermotogae</taxon>
        <taxon>Kosmotogales</taxon>
        <taxon>Kosmotogaceae</taxon>
        <taxon>Kosmotoga</taxon>
    </lineage>
</organism>
<gene>
    <name evidence="1" type="primary">rplB</name>
    <name type="ordered locus">Kole_1899</name>
</gene>
<accession>C5CGR1</accession>
<evidence type="ECO:0000255" key="1">
    <source>
        <dbReference type="HAMAP-Rule" id="MF_01320"/>
    </source>
</evidence>
<evidence type="ECO:0000256" key="2">
    <source>
        <dbReference type="SAM" id="MobiDB-lite"/>
    </source>
</evidence>
<evidence type="ECO:0000305" key="3"/>
<sequence>MGLKKFKPVTPGRRFMLIPDYSEITKTEPEKSLLVPLKKKAGRNHHGHVTVRHQGGGHKRMYRIIDFKRNKFGIPARVASIEYDPNRTARIALLVYADGEKRYILAPKGLKVGDTIMNGPDAEITVGNALPLANIPVGTIVHNIEFIPGKGGQIARSAGTYAQLMAKEGRYALLRMPSGELRKVLVTCMATIGMVGNEDHSNEVHGKAGRKRWLGIRPTVRGMTMNPVDHPMGGGEGRSKGHIPQSPWGIPAKGYKTRKSKKPSDKLIVKRRKQK</sequence>